<reference key="1">
    <citation type="journal article" date="2011" name="J. Bacteriol.">
        <title>Comparative genomics of 28 Salmonella enterica isolates: evidence for CRISPR-mediated adaptive sublineage evolution.</title>
        <authorList>
            <person name="Fricke W.F."/>
            <person name="Mammel M.K."/>
            <person name="McDermott P.F."/>
            <person name="Tartera C."/>
            <person name="White D.G."/>
            <person name="Leclerc J.E."/>
            <person name="Ravel J."/>
            <person name="Cebula T.A."/>
        </authorList>
    </citation>
    <scope>NUCLEOTIDE SEQUENCE [LARGE SCALE GENOMIC DNA]</scope>
    <source>
        <strain>SL476</strain>
    </source>
</reference>
<dbReference type="EMBL" id="CP001120">
    <property type="protein sequence ID" value="ACF69749.1"/>
    <property type="molecule type" value="Genomic_DNA"/>
</dbReference>
<dbReference type="RefSeq" id="WP_000460698.1">
    <property type="nucleotide sequence ID" value="NC_011083.1"/>
</dbReference>
<dbReference type="KEGG" id="seh:SeHA_C1406"/>
<dbReference type="HOGENOM" id="CLU_125889_0_0_6"/>
<dbReference type="Proteomes" id="UP000001866">
    <property type="component" value="Chromosome"/>
</dbReference>
<dbReference type="GO" id="GO:0005886">
    <property type="term" value="C:plasma membrane"/>
    <property type="evidence" value="ECO:0007669"/>
    <property type="project" value="UniProtKB-SubCell"/>
</dbReference>
<dbReference type="HAMAP" id="MF_01874">
    <property type="entry name" value="UPF0756"/>
    <property type="match status" value="1"/>
</dbReference>
<dbReference type="InterPro" id="IPR007382">
    <property type="entry name" value="UPF0756_TM"/>
</dbReference>
<dbReference type="PANTHER" id="PTHR38452">
    <property type="entry name" value="UPF0756 MEMBRANE PROTEIN YEAL"/>
    <property type="match status" value="1"/>
</dbReference>
<dbReference type="PANTHER" id="PTHR38452:SF1">
    <property type="entry name" value="UPF0756 MEMBRANE PROTEIN YEAL"/>
    <property type="match status" value="1"/>
</dbReference>
<dbReference type="Pfam" id="PF04284">
    <property type="entry name" value="DUF441"/>
    <property type="match status" value="1"/>
</dbReference>
<accession>B4TFR0</accession>
<organism>
    <name type="scientific">Salmonella heidelberg (strain SL476)</name>
    <dbReference type="NCBI Taxonomy" id="454169"/>
    <lineage>
        <taxon>Bacteria</taxon>
        <taxon>Pseudomonadati</taxon>
        <taxon>Pseudomonadota</taxon>
        <taxon>Gammaproteobacteria</taxon>
        <taxon>Enterobacterales</taxon>
        <taxon>Enterobacteriaceae</taxon>
        <taxon>Salmonella</taxon>
    </lineage>
</organism>
<name>YEAL_SALHS</name>
<protein>
    <recommendedName>
        <fullName evidence="1">UPF0756 membrane protein YeaL</fullName>
    </recommendedName>
</protein>
<evidence type="ECO:0000255" key="1">
    <source>
        <dbReference type="HAMAP-Rule" id="MF_01874"/>
    </source>
</evidence>
<proteinExistence type="inferred from homology"/>
<keyword id="KW-1003">Cell membrane</keyword>
<keyword id="KW-0472">Membrane</keyword>
<keyword id="KW-0812">Transmembrane</keyword>
<keyword id="KW-1133">Transmembrane helix</keyword>
<feature type="chain" id="PRO_0000388926" description="UPF0756 membrane protein YeaL">
    <location>
        <begin position="1"/>
        <end position="148"/>
    </location>
</feature>
<feature type="transmembrane region" description="Helical" evidence="1">
    <location>
        <begin position="14"/>
        <end position="34"/>
    </location>
</feature>
<feature type="transmembrane region" description="Helical" evidence="1">
    <location>
        <begin position="51"/>
        <end position="71"/>
    </location>
</feature>
<feature type="transmembrane region" description="Helical" evidence="1">
    <location>
        <begin position="86"/>
        <end position="106"/>
    </location>
</feature>
<feature type="transmembrane region" description="Helical" evidence="1">
    <location>
        <begin position="121"/>
        <end position="141"/>
    </location>
</feature>
<gene>
    <name evidence="1" type="primary">yeaL</name>
    <name type="ordered locus">SeHA_C1406</name>
</gene>
<sequence>MFDVTLLILLGLAALGFISHNTTVAVSILVLIIVRVTPLNTFFPWIEKQGLTVGIIILTIGVMAPIASGTLPPSTLIHSFVNWKSLVAIAVGVFVSWLGGRGITLMGNQPQLVAGLLVGTVLGVALFRGVPVGPLIAAGLVSLIVGKQ</sequence>
<comment type="subcellular location">
    <subcellularLocation>
        <location evidence="1">Cell membrane</location>
        <topology evidence="1">Multi-pass membrane protein</topology>
    </subcellularLocation>
</comment>
<comment type="similarity">
    <text evidence="1">Belongs to the UPF0756 family.</text>
</comment>